<name>HSLV_SYNWW</name>
<feature type="chain" id="PRO_0000336799" description="ATP-dependent protease subunit HslV">
    <location>
        <begin position="1"/>
        <end position="178"/>
    </location>
</feature>
<feature type="active site" evidence="1">
    <location>
        <position position="5"/>
    </location>
</feature>
<feature type="binding site" evidence="1">
    <location>
        <position position="161"/>
    </location>
    <ligand>
        <name>Na(+)</name>
        <dbReference type="ChEBI" id="CHEBI:29101"/>
    </ligand>
</feature>
<feature type="binding site" evidence="1">
    <location>
        <position position="164"/>
    </location>
    <ligand>
        <name>Na(+)</name>
        <dbReference type="ChEBI" id="CHEBI:29101"/>
    </ligand>
</feature>
<feature type="binding site" evidence="1">
    <location>
        <position position="167"/>
    </location>
    <ligand>
        <name>Na(+)</name>
        <dbReference type="ChEBI" id="CHEBI:29101"/>
    </ligand>
</feature>
<comment type="function">
    <text evidence="1">Protease subunit of a proteasome-like degradation complex believed to be a general protein degrading machinery.</text>
</comment>
<comment type="catalytic activity">
    <reaction evidence="1">
        <text>ATP-dependent cleavage of peptide bonds with broad specificity.</text>
        <dbReference type="EC" id="3.4.25.2"/>
    </reaction>
</comment>
<comment type="activity regulation">
    <text evidence="1">Allosterically activated by HslU binding.</text>
</comment>
<comment type="subunit">
    <text evidence="1">A double ring-shaped homohexamer of HslV is capped on each side by a ring-shaped HslU homohexamer. The assembly of the HslU/HslV complex is dependent on binding of ATP.</text>
</comment>
<comment type="subcellular location">
    <subcellularLocation>
        <location evidence="1">Cytoplasm</location>
    </subcellularLocation>
</comment>
<comment type="similarity">
    <text evidence="1">Belongs to the peptidase T1B family. HslV subfamily.</text>
</comment>
<evidence type="ECO:0000255" key="1">
    <source>
        <dbReference type="HAMAP-Rule" id="MF_00248"/>
    </source>
</evidence>
<accession>Q0AYP2</accession>
<proteinExistence type="inferred from homology"/>
<dbReference type="EC" id="3.4.25.2" evidence="1"/>
<dbReference type="EMBL" id="CP000448">
    <property type="protein sequence ID" value="ABI68162.1"/>
    <property type="molecule type" value="Genomic_DNA"/>
</dbReference>
<dbReference type="RefSeq" id="WP_011640267.1">
    <property type="nucleotide sequence ID" value="NC_008346.1"/>
</dbReference>
<dbReference type="SMR" id="Q0AYP2"/>
<dbReference type="STRING" id="335541.Swol_0843"/>
<dbReference type="MEROPS" id="T01.007"/>
<dbReference type="KEGG" id="swo:Swol_0843"/>
<dbReference type="eggNOG" id="COG5405">
    <property type="taxonomic scope" value="Bacteria"/>
</dbReference>
<dbReference type="HOGENOM" id="CLU_093872_1_0_9"/>
<dbReference type="OrthoDB" id="9804884at2"/>
<dbReference type="Proteomes" id="UP000001968">
    <property type="component" value="Chromosome"/>
</dbReference>
<dbReference type="GO" id="GO:0009376">
    <property type="term" value="C:HslUV protease complex"/>
    <property type="evidence" value="ECO:0007669"/>
    <property type="project" value="UniProtKB-UniRule"/>
</dbReference>
<dbReference type="GO" id="GO:0005839">
    <property type="term" value="C:proteasome core complex"/>
    <property type="evidence" value="ECO:0007669"/>
    <property type="project" value="InterPro"/>
</dbReference>
<dbReference type="GO" id="GO:0046872">
    <property type="term" value="F:metal ion binding"/>
    <property type="evidence" value="ECO:0007669"/>
    <property type="project" value="UniProtKB-KW"/>
</dbReference>
<dbReference type="GO" id="GO:0004298">
    <property type="term" value="F:threonine-type endopeptidase activity"/>
    <property type="evidence" value="ECO:0007669"/>
    <property type="project" value="UniProtKB-KW"/>
</dbReference>
<dbReference type="GO" id="GO:0051603">
    <property type="term" value="P:proteolysis involved in protein catabolic process"/>
    <property type="evidence" value="ECO:0007669"/>
    <property type="project" value="InterPro"/>
</dbReference>
<dbReference type="CDD" id="cd01913">
    <property type="entry name" value="protease_HslV"/>
    <property type="match status" value="1"/>
</dbReference>
<dbReference type="Gene3D" id="3.60.20.10">
    <property type="entry name" value="Glutamine Phosphoribosylpyrophosphate, subunit 1, domain 1"/>
    <property type="match status" value="1"/>
</dbReference>
<dbReference type="HAMAP" id="MF_00248">
    <property type="entry name" value="HslV"/>
    <property type="match status" value="1"/>
</dbReference>
<dbReference type="InterPro" id="IPR022281">
    <property type="entry name" value="ATP-dep_Prtase_HsIV_su"/>
</dbReference>
<dbReference type="InterPro" id="IPR029055">
    <property type="entry name" value="Ntn_hydrolases_N"/>
</dbReference>
<dbReference type="InterPro" id="IPR001353">
    <property type="entry name" value="Proteasome_sua/b"/>
</dbReference>
<dbReference type="InterPro" id="IPR023333">
    <property type="entry name" value="Proteasome_suB-type"/>
</dbReference>
<dbReference type="NCBIfam" id="TIGR03692">
    <property type="entry name" value="ATP_dep_HslV"/>
    <property type="match status" value="1"/>
</dbReference>
<dbReference type="NCBIfam" id="NF003964">
    <property type="entry name" value="PRK05456.1"/>
    <property type="match status" value="1"/>
</dbReference>
<dbReference type="PANTHER" id="PTHR32194:SF0">
    <property type="entry name" value="ATP-DEPENDENT PROTEASE SUBUNIT HSLV"/>
    <property type="match status" value="1"/>
</dbReference>
<dbReference type="PANTHER" id="PTHR32194">
    <property type="entry name" value="METALLOPROTEASE TLDD"/>
    <property type="match status" value="1"/>
</dbReference>
<dbReference type="Pfam" id="PF00227">
    <property type="entry name" value="Proteasome"/>
    <property type="match status" value="1"/>
</dbReference>
<dbReference type="PIRSF" id="PIRSF039093">
    <property type="entry name" value="HslV"/>
    <property type="match status" value="1"/>
</dbReference>
<dbReference type="SUPFAM" id="SSF56235">
    <property type="entry name" value="N-terminal nucleophile aminohydrolases (Ntn hydrolases)"/>
    <property type="match status" value="1"/>
</dbReference>
<dbReference type="PROSITE" id="PS51476">
    <property type="entry name" value="PROTEASOME_BETA_2"/>
    <property type="match status" value="1"/>
</dbReference>
<sequence length="178" mass="18958">MFQATTIIAVRKGQQTAIAGDGQVTLGQNTIMKQNATKIRRLYEGKVIAGFAGAVADAFTLFAKFEEKLKQAGGNLSKAAVEIAREWRSDRILRRLEALLIVADAEKIFIVSGSGELIEPDDGIAAIGSGGAYALAAARALNAFSELNAREIAVESLKIASGICVYTNEQISVEVIEK</sequence>
<reference key="1">
    <citation type="journal article" date="2010" name="Environ. Microbiol.">
        <title>The genome of Syntrophomonas wolfei: new insights into syntrophic metabolism and biohydrogen production.</title>
        <authorList>
            <person name="Sieber J.R."/>
            <person name="Sims D.R."/>
            <person name="Han C."/>
            <person name="Kim E."/>
            <person name="Lykidis A."/>
            <person name="Lapidus A.L."/>
            <person name="McDonnald E."/>
            <person name="Rohlin L."/>
            <person name="Culley D.E."/>
            <person name="Gunsalus R."/>
            <person name="McInerney M.J."/>
        </authorList>
    </citation>
    <scope>NUCLEOTIDE SEQUENCE [LARGE SCALE GENOMIC DNA]</scope>
    <source>
        <strain>DSM 2245B / Goettingen</strain>
    </source>
</reference>
<keyword id="KW-0021">Allosteric enzyme</keyword>
<keyword id="KW-0963">Cytoplasm</keyword>
<keyword id="KW-0378">Hydrolase</keyword>
<keyword id="KW-0479">Metal-binding</keyword>
<keyword id="KW-0645">Protease</keyword>
<keyword id="KW-1185">Reference proteome</keyword>
<keyword id="KW-0915">Sodium</keyword>
<keyword id="KW-0888">Threonine protease</keyword>
<protein>
    <recommendedName>
        <fullName evidence="1">ATP-dependent protease subunit HslV</fullName>
        <ecNumber evidence="1">3.4.25.2</ecNumber>
    </recommendedName>
</protein>
<gene>
    <name evidence="1" type="primary">hslV</name>
    <name type="ordered locus">Swol_0843</name>
</gene>
<organism>
    <name type="scientific">Syntrophomonas wolfei subsp. wolfei (strain DSM 2245B / Goettingen)</name>
    <dbReference type="NCBI Taxonomy" id="335541"/>
    <lineage>
        <taxon>Bacteria</taxon>
        <taxon>Bacillati</taxon>
        <taxon>Bacillota</taxon>
        <taxon>Clostridia</taxon>
        <taxon>Eubacteriales</taxon>
        <taxon>Syntrophomonadaceae</taxon>
        <taxon>Syntrophomonas</taxon>
    </lineage>
</organism>